<proteinExistence type="evidence at protein level"/>
<feature type="chain" id="PRO_0000320619" description="Microtubule-associated tyrosine carboxypeptidase 1">
    <location>
        <begin position="1"/>
        <end position="471"/>
    </location>
</feature>
<feature type="region of interest" description="Disordered" evidence="1">
    <location>
        <begin position="1"/>
        <end position="40"/>
    </location>
</feature>
<feature type="region of interest" description="Disordered" evidence="1">
    <location>
        <begin position="76"/>
        <end position="116"/>
    </location>
</feature>
<feature type="active site" description="Nucleophile" evidence="2">
    <location>
        <position position="281"/>
    </location>
</feature>
<feature type="binding site" evidence="2 9">
    <location>
        <position position="280"/>
    </location>
    <ligand>
        <name>Zn(2+)</name>
        <dbReference type="ChEBI" id="CHEBI:29105"/>
        <note>catalytic</note>
    </ligand>
</feature>
<feature type="binding site" evidence="2 9">
    <location>
        <position position="285"/>
    </location>
    <ligand>
        <name>Zn(2+)</name>
        <dbReference type="ChEBI" id="CHEBI:29105"/>
        <note>catalytic</note>
    </ligand>
</feature>
<feature type="binding site" evidence="2 9">
    <location>
        <position position="316"/>
    </location>
    <ligand>
        <name>Zn(2+)</name>
        <dbReference type="ChEBI" id="CHEBI:29105"/>
        <note>catalytic</note>
    </ligand>
</feature>
<feature type="splice variant" id="VSP_031689" description="In isoform 3." evidence="3">
    <original>MVLDSGAQAYDQAPPSPPTSPPSLRHRLKPSDRDGPPLYPWSQSLALPLALAVPPALQPQPEQQPFSQMLLGHRGHMRRSESTYSVNSTGRRGRGTLGRPPPGRGRNPGGGTLRPAASLPHIAKTQRDAGHIASKSPCMLVALRPTNMDRERDKFFQSHYTYNPQFEYQEPMPTAVLEKYCEASGQFIHQAVGIIEAVLEKFGTYEHFEAATGGQLLTKCQIWSIVRKYMQKEGCAGEVVVQLSEDLLSQAVMMVENSRPTLAINLTGARQYWLEGMLRHEI</original>
    <variation>MTVQDDMGTQDVGQGGICILVPRRAGGNVSLGEFVHVCGCVGVGWGADGWERIHVCEPLWILGCESTGGGASRCLGLGEPVCEPEFRSMRMEVSRPEPRPDGTGPGLGSQAGPRTPRPAPPPLAFPA</variation>
    <location>
        <begin position="1"/>
        <end position="282"/>
    </location>
</feature>
<feature type="splice variant" id="VSP_031690" description="In isoform 2." evidence="4">
    <original>GCFSKDQVYLDGIVRILRHRQTID</original>
    <variation>ARTRCTWTASCAFCDIARPSISRC</variation>
    <location>
        <begin position="385"/>
        <end position="408"/>
    </location>
</feature>
<feature type="splice variant" id="VSP_031691" description="In isoform 2." evidence="4">
    <location>
        <begin position="409"/>
        <end position="471"/>
    </location>
</feature>
<feature type="mutagenesis site" description="Reduced binding to microtubules." evidence="2">
    <original>K</original>
    <variation>E</variation>
    <location>
        <position position="219"/>
    </location>
</feature>
<feature type="mutagenesis site" description="Reduced binding to microtubules." evidence="2">
    <original>W</original>
    <variation>A</variation>
    <location>
        <position position="223"/>
    </location>
</feature>
<feature type="mutagenesis site" description="Reduced binding to microtubules." evidence="2">
    <original>R</original>
    <variation>A</variation>
    <location>
        <position position="227"/>
    </location>
</feature>
<feature type="mutagenesis site" description="Abolished tyrosine carboxypeptidase activity." evidence="2">
    <original>H</original>
    <variation>A</variation>
    <location>
        <position position="280"/>
    </location>
</feature>
<feature type="mutagenesis site" description="Abolished tyrosine carboxypeptidase activity." evidence="2">
    <original>E</original>
    <variation>A</variation>
    <variation>Q</variation>
    <location>
        <position position="281"/>
    </location>
</feature>
<feature type="mutagenesis site" description="Abolished tyrosine carboxypeptidase activity." evidence="2">
    <original>H</original>
    <variation>A</variation>
    <location>
        <position position="285"/>
    </location>
</feature>
<feature type="mutagenesis site" description="Abolished tyrosine carboxypeptidase activity." evidence="2">
    <original>E</original>
    <variation>A</variation>
    <location>
        <position position="316"/>
    </location>
</feature>
<feature type="helix" evidence="10">
    <location>
        <begin position="141"/>
        <end position="143"/>
    </location>
</feature>
<feature type="helix" evidence="10">
    <location>
        <begin position="148"/>
        <end position="157"/>
    </location>
</feature>
<feature type="turn" evidence="11">
    <location>
        <begin position="158"/>
        <end position="160"/>
    </location>
</feature>
<feature type="strand" evidence="10">
    <location>
        <begin position="169"/>
        <end position="171"/>
    </location>
</feature>
<feature type="helix" evidence="10">
    <location>
        <begin position="174"/>
        <end position="179"/>
    </location>
</feature>
<feature type="helix" evidence="10">
    <location>
        <begin position="188"/>
        <end position="202"/>
    </location>
</feature>
<feature type="helix" evidence="10">
    <location>
        <begin position="205"/>
        <end position="213"/>
    </location>
</feature>
<feature type="helix" evidence="10">
    <location>
        <begin position="219"/>
        <end position="232"/>
    </location>
</feature>
<feature type="strand" evidence="10">
    <location>
        <begin position="238"/>
        <end position="246"/>
    </location>
</feature>
<feature type="strand" evidence="10">
    <location>
        <begin position="248"/>
        <end position="256"/>
    </location>
</feature>
<feature type="strand" evidence="10">
    <location>
        <begin position="259"/>
        <end position="266"/>
    </location>
</feature>
<feature type="turn" evidence="10">
    <location>
        <begin position="271"/>
        <end position="273"/>
    </location>
</feature>
<feature type="helix" evidence="10">
    <location>
        <begin position="274"/>
        <end position="281"/>
    </location>
</feature>
<feature type="turn" evidence="10">
    <location>
        <begin position="282"/>
        <end position="284"/>
    </location>
</feature>
<feature type="helix" evidence="10">
    <location>
        <begin position="285"/>
        <end position="293"/>
    </location>
</feature>
<feature type="helix" evidence="10">
    <location>
        <begin position="300"/>
        <end position="306"/>
    </location>
</feature>
<feature type="helix" evidence="10">
    <location>
        <begin position="314"/>
        <end position="323"/>
    </location>
</feature>
<feature type="turn" evidence="10">
    <location>
        <begin position="324"/>
        <end position="326"/>
    </location>
</feature>
<feature type="helix" evidence="10">
    <location>
        <begin position="333"/>
        <end position="345"/>
    </location>
</feature>
<feature type="helix" evidence="10">
    <location>
        <begin position="350"/>
        <end position="356"/>
    </location>
</feature>
<feature type="helix" evidence="10">
    <location>
        <begin position="357"/>
        <end position="359"/>
    </location>
</feature>
<feature type="helix" evidence="10">
    <location>
        <begin position="364"/>
        <end position="374"/>
    </location>
</feature>
<feature type="turn" evidence="10">
    <location>
        <begin position="375"/>
        <end position="377"/>
    </location>
</feature>
<feature type="helix" evidence="10">
    <location>
        <begin position="389"/>
        <end position="391"/>
    </location>
</feature>
<feature type="helix" evidence="10">
    <location>
        <begin position="392"/>
        <end position="402"/>
    </location>
</feature>
<feature type="turn" evidence="10">
    <location>
        <begin position="403"/>
        <end position="406"/>
    </location>
</feature>
<feature type="helix" evidence="10">
    <location>
        <begin position="409"/>
        <end position="414"/>
    </location>
</feature>
<feature type="helix" evidence="10">
    <location>
        <begin position="420"/>
        <end position="422"/>
    </location>
</feature>
<feature type="helix" evidence="10">
    <location>
        <begin position="423"/>
        <end position="426"/>
    </location>
</feature>
<feature type="helix" evidence="10">
    <location>
        <begin position="427"/>
        <end position="429"/>
    </location>
</feature>
<feature type="helix" evidence="10">
    <location>
        <begin position="439"/>
        <end position="441"/>
    </location>
</feature>
<feature type="helix" evidence="10">
    <location>
        <begin position="444"/>
        <end position="457"/>
    </location>
</feature>
<feature type="helix" evidence="10">
    <location>
        <begin position="462"/>
        <end position="468"/>
    </location>
</feature>
<name>MACA1_HUMAN</name>
<reference key="1">
    <citation type="journal article" date="2004" name="Nat. Genet.">
        <title>Complete sequencing and characterization of 21,243 full-length human cDNAs.</title>
        <authorList>
            <person name="Ota T."/>
            <person name="Suzuki Y."/>
            <person name="Nishikawa T."/>
            <person name="Otsuki T."/>
            <person name="Sugiyama T."/>
            <person name="Irie R."/>
            <person name="Wakamatsu A."/>
            <person name="Hayashi K."/>
            <person name="Sato H."/>
            <person name="Nagai K."/>
            <person name="Kimura K."/>
            <person name="Makita H."/>
            <person name="Sekine M."/>
            <person name="Obayashi M."/>
            <person name="Nishi T."/>
            <person name="Shibahara T."/>
            <person name="Tanaka T."/>
            <person name="Ishii S."/>
            <person name="Yamamoto J."/>
            <person name="Saito K."/>
            <person name="Kawai Y."/>
            <person name="Isono Y."/>
            <person name="Nakamura Y."/>
            <person name="Nagahari K."/>
            <person name="Murakami K."/>
            <person name="Yasuda T."/>
            <person name="Iwayanagi T."/>
            <person name="Wagatsuma M."/>
            <person name="Shiratori A."/>
            <person name="Sudo H."/>
            <person name="Hosoiri T."/>
            <person name="Kaku Y."/>
            <person name="Kodaira H."/>
            <person name="Kondo H."/>
            <person name="Sugawara M."/>
            <person name="Takahashi M."/>
            <person name="Kanda K."/>
            <person name="Yokoi T."/>
            <person name="Furuya T."/>
            <person name="Kikkawa E."/>
            <person name="Omura Y."/>
            <person name="Abe K."/>
            <person name="Kamihara K."/>
            <person name="Katsuta N."/>
            <person name="Sato K."/>
            <person name="Tanikawa M."/>
            <person name="Yamazaki M."/>
            <person name="Ninomiya K."/>
            <person name="Ishibashi T."/>
            <person name="Yamashita H."/>
            <person name="Murakawa K."/>
            <person name="Fujimori K."/>
            <person name="Tanai H."/>
            <person name="Kimata M."/>
            <person name="Watanabe M."/>
            <person name="Hiraoka S."/>
            <person name="Chiba Y."/>
            <person name="Ishida S."/>
            <person name="Ono Y."/>
            <person name="Takiguchi S."/>
            <person name="Watanabe S."/>
            <person name="Yosida M."/>
            <person name="Hotuta T."/>
            <person name="Kusano J."/>
            <person name="Kanehori K."/>
            <person name="Takahashi-Fujii A."/>
            <person name="Hara H."/>
            <person name="Tanase T.-O."/>
            <person name="Nomura Y."/>
            <person name="Togiya S."/>
            <person name="Komai F."/>
            <person name="Hara R."/>
            <person name="Takeuchi K."/>
            <person name="Arita M."/>
            <person name="Imose N."/>
            <person name="Musashino K."/>
            <person name="Yuuki H."/>
            <person name="Oshima A."/>
            <person name="Sasaki N."/>
            <person name="Aotsuka S."/>
            <person name="Yoshikawa Y."/>
            <person name="Matsunawa H."/>
            <person name="Ichihara T."/>
            <person name="Shiohata N."/>
            <person name="Sano S."/>
            <person name="Moriya S."/>
            <person name="Momiyama H."/>
            <person name="Satoh N."/>
            <person name="Takami S."/>
            <person name="Terashima Y."/>
            <person name="Suzuki O."/>
            <person name="Nakagawa S."/>
            <person name="Senoh A."/>
            <person name="Mizoguchi H."/>
            <person name="Goto Y."/>
            <person name="Shimizu F."/>
            <person name="Wakebe H."/>
            <person name="Hishigaki H."/>
            <person name="Watanabe T."/>
            <person name="Sugiyama A."/>
            <person name="Takemoto M."/>
            <person name="Kawakami B."/>
            <person name="Yamazaki M."/>
            <person name="Watanabe K."/>
            <person name="Kumagai A."/>
            <person name="Itakura S."/>
            <person name="Fukuzumi Y."/>
            <person name="Fujimori Y."/>
            <person name="Komiyama M."/>
            <person name="Tashiro H."/>
            <person name="Tanigami A."/>
            <person name="Fujiwara T."/>
            <person name="Ono T."/>
            <person name="Yamada K."/>
            <person name="Fujii Y."/>
            <person name="Ozaki K."/>
            <person name="Hirao M."/>
            <person name="Ohmori Y."/>
            <person name="Kawabata A."/>
            <person name="Hikiji T."/>
            <person name="Kobatake N."/>
            <person name="Inagaki H."/>
            <person name="Ikema Y."/>
            <person name="Okamoto S."/>
            <person name="Okitani R."/>
            <person name="Kawakami T."/>
            <person name="Noguchi S."/>
            <person name="Itoh T."/>
            <person name="Shigeta K."/>
            <person name="Senba T."/>
            <person name="Matsumura K."/>
            <person name="Nakajima Y."/>
            <person name="Mizuno T."/>
            <person name="Morinaga M."/>
            <person name="Sasaki M."/>
            <person name="Togashi T."/>
            <person name="Oyama M."/>
            <person name="Hata H."/>
            <person name="Watanabe M."/>
            <person name="Komatsu T."/>
            <person name="Mizushima-Sugano J."/>
            <person name="Satoh T."/>
            <person name="Shirai Y."/>
            <person name="Takahashi Y."/>
            <person name="Nakagawa K."/>
            <person name="Okumura K."/>
            <person name="Nagase T."/>
            <person name="Nomura N."/>
            <person name="Kikuchi H."/>
            <person name="Masuho Y."/>
            <person name="Yamashita R."/>
            <person name="Nakai K."/>
            <person name="Yada T."/>
            <person name="Nakamura Y."/>
            <person name="Ohara O."/>
            <person name="Isogai T."/>
            <person name="Sugano S."/>
        </authorList>
    </citation>
    <scope>NUCLEOTIDE SEQUENCE [LARGE SCALE MRNA] (ISOFORM 3)</scope>
    <source>
        <tissue>Brain</tissue>
    </source>
</reference>
<reference key="2">
    <citation type="journal article" date="2007" name="BMC Genomics">
        <title>The full-ORF clone resource of the German cDNA consortium.</title>
        <authorList>
            <person name="Bechtel S."/>
            <person name="Rosenfelder H."/>
            <person name="Duda A."/>
            <person name="Schmidt C.P."/>
            <person name="Ernst U."/>
            <person name="Wellenreuther R."/>
            <person name="Mehrle A."/>
            <person name="Schuster C."/>
            <person name="Bahr A."/>
            <person name="Bloecker H."/>
            <person name="Heubner D."/>
            <person name="Hoerlein A."/>
            <person name="Michel G."/>
            <person name="Wedler H."/>
            <person name="Koehrer K."/>
            <person name="Ottenwaelder B."/>
            <person name="Poustka A."/>
            <person name="Wiemann S."/>
            <person name="Schupp I."/>
        </authorList>
    </citation>
    <scope>NUCLEOTIDE SEQUENCE [LARGE SCALE MRNA] (ISOFORM 2)</scope>
    <source>
        <tissue>Amygdala</tissue>
    </source>
</reference>
<reference key="3">
    <citation type="submission" date="2005-07" db="EMBL/GenBank/DDBJ databases">
        <authorList>
            <person name="Mural R.J."/>
            <person name="Istrail S."/>
            <person name="Sutton G.G."/>
            <person name="Florea L."/>
            <person name="Halpern A.L."/>
            <person name="Mobarry C.M."/>
            <person name="Lippert R."/>
            <person name="Walenz B."/>
            <person name="Shatkay H."/>
            <person name="Dew I."/>
            <person name="Miller J.R."/>
            <person name="Flanigan M.J."/>
            <person name="Edwards N.J."/>
            <person name="Bolanos R."/>
            <person name="Fasulo D."/>
            <person name="Halldorsson B.V."/>
            <person name="Hannenhalli S."/>
            <person name="Turner R."/>
            <person name="Yooseph S."/>
            <person name="Lu F."/>
            <person name="Nusskern D.R."/>
            <person name="Shue B.C."/>
            <person name="Zheng X.H."/>
            <person name="Zhong F."/>
            <person name="Delcher A.L."/>
            <person name="Huson D.H."/>
            <person name="Kravitz S.A."/>
            <person name="Mouchard L."/>
            <person name="Reinert K."/>
            <person name="Remington K.A."/>
            <person name="Clark A.G."/>
            <person name="Waterman M.S."/>
            <person name="Eichler E.E."/>
            <person name="Adams M.D."/>
            <person name="Hunkapiller M.W."/>
            <person name="Myers E.W."/>
            <person name="Venter J.C."/>
        </authorList>
    </citation>
    <scope>NUCLEOTIDE SEQUENCE [LARGE SCALE GENOMIC DNA]</scope>
</reference>
<reference key="4">
    <citation type="journal article" date="2004" name="Genome Res.">
        <title>The status, quality, and expansion of the NIH full-length cDNA project: the Mammalian Gene Collection (MGC).</title>
        <authorList>
            <consortium name="The MGC Project Team"/>
        </authorList>
    </citation>
    <scope>NUCLEOTIDE SEQUENCE [LARGE SCALE MRNA] (ISOFORM 1)</scope>
    <source>
        <tissue>Brain</tissue>
        <tissue>Skin</tissue>
    </source>
</reference>
<reference key="5">
    <citation type="journal article" date="2022" name="Science">
        <title>Posttranslational modification of microtubules by the MATCAP detyrosinase.</title>
        <authorList>
            <person name="Landskron L."/>
            <person name="Bak J."/>
            <person name="Adamopoulos A."/>
            <person name="Kaplani K."/>
            <person name="Moraiti M."/>
            <person name="van den Hengel L.G."/>
            <person name="Song J.Y."/>
            <person name="Bleijerveld O.B."/>
            <person name="Nieuwenhuis J."/>
            <person name="Heidebrecht T."/>
            <person name="Henneman L."/>
            <person name="Moutin M.J."/>
            <person name="Barisic M."/>
            <person name="Taraviras S."/>
            <person name="Perrakis A."/>
            <person name="Brummelkamp T.R."/>
        </authorList>
    </citation>
    <scope>X-RAY CRYSTALLOGRAPHY (2.1 ANGSTROMS) OF 137-471</scope>
    <scope>STRUCTURE BY ELECTRON MICROSCOPY (2.9 ANGSTROMS) IN COMPLEX WITH ALPHA-TUBULIN; BETA-TUBULIN AND ZINC</scope>
    <scope>FUNCTION</scope>
    <scope>CATALYTIC ACTIVITY</scope>
    <scope>ACTIVE SITE</scope>
    <scope>COFACTOR</scope>
    <scope>DOMAIN</scope>
    <scope>MUTAGENESIS OF LYS-219; TRP-223; ARG-227; HIS-280; GLU-281; HIS-285 AND GLU-316</scope>
</reference>
<gene>
    <name evidence="8" type="primary">MATCAP1</name>
    <name type="synonym">KIAA0895L</name>
    <name evidence="5" type="synonym">MATCAP</name>
</gene>
<comment type="function">
    <text evidence="2">Tyrosine carboxypeptidase that removes the C-terminal tyrosine residue of alpha-tubulin, thereby regulating microtubule dynamics and function (PubMed:35482892). Also able to remove the C-terminal phenylalanine residue of alpha-tubulin TUBA8 (PubMed:35482892). Recognizes adjacent tubulin dimers along the same protofilament (PubMed:35482892).</text>
</comment>
<comment type="catalytic activity">
    <reaction evidence="2">
        <text>C-terminal L-alpha-aminoacyl-L-glutamyl-L-glutamyl-L-tyrosyl-[tubulin] + H2O = C-terminal L-alpha-aminoacyl-L-glutamyl-L-glutamyl-[tubulin] + L-tyrosine</text>
        <dbReference type="Rhea" id="RHEA:57444"/>
        <dbReference type="Rhea" id="RHEA-COMP:16434"/>
        <dbReference type="Rhea" id="RHEA-COMP:16435"/>
        <dbReference type="ChEBI" id="CHEBI:15377"/>
        <dbReference type="ChEBI" id="CHEBI:58315"/>
        <dbReference type="ChEBI" id="CHEBI:149554"/>
        <dbReference type="ChEBI" id="CHEBI:149555"/>
        <dbReference type="EC" id="3.4.17.17"/>
    </reaction>
    <physiologicalReaction direction="left-to-right" evidence="2">
        <dbReference type="Rhea" id="RHEA:57445"/>
    </physiologicalReaction>
</comment>
<comment type="catalytic activity">
    <reaction evidence="2">
        <text>C-terminal L-alpha-aminoacyl-L-glutamyl-L-glutamyl-L-phenylalanyl-[tubulin] + H2O = C-terminal L-alpha-aminoacyl-L-glutamyl-L-glutamyl-[tubulin] + L-phenylalanine</text>
        <dbReference type="Rhea" id="RHEA:72663"/>
        <dbReference type="Rhea" id="RHEA-COMP:16435"/>
        <dbReference type="Rhea" id="RHEA-COMP:18133"/>
        <dbReference type="ChEBI" id="CHEBI:15377"/>
        <dbReference type="ChEBI" id="CHEBI:58095"/>
        <dbReference type="ChEBI" id="CHEBI:149555"/>
        <dbReference type="ChEBI" id="CHEBI:192362"/>
    </reaction>
    <physiologicalReaction direction="left-to-right" evidence="2">
        <dbReference type="Rhea" id="RHEA:72664"/>
    </physiologicalReaction>
</comment>
<comment type="cofactor">
    <cofactor evidence="2">
        <name>Zn(2+)</name>
        <dbReference type="ChEBI" id="CHEBI:29105"/>
    </cofactor>
    <text evidence="2">Binds 1 zinc ion per subunit.</text>
</comment>
<comment type="interaction">
    <interactant intactId="EBI-17494528">
        <id>Q68EN5</id>
    </interactant>
    <interactant intactId="EBI-17494306">
        <id>Q8NAP8</id>
        <label>ZBTB8B</label>
    </interactant>
    <organismsDiffer>false</organismsDiffer>
    <experiments>3</experiments>
</comment>
<comment type="subcellular location">
    <subcellularLocation>
        <location evidence="2">Cytoplasm</location>
        <location evidence="2">Cytoskeleton</location>
    </subcellularLocation>
    <text evidence="2">Associates with microtubules.</text>
</comment>
<comment type="alternative products">
    <event type="alternative splicing"/>
    <isoform>
        <id>Q68EN5-1</id>
        <name>1</name>
        <sequence type="displayed"/>
    </isoform>
    <isoform>
        <id>Q68EN5-2</id>
        <name>2</name>
        <sequence type="described" ref="VSP_031690 VSP_031691"/>
    </isoform>
    <isoform>
        <id>Q68EN5-3</id>
        <name>3</name>
        <sequence type="described" ref="VSP_031689"/>
    </isoform>
</comment>
<comment type="domain">
    <text evidence="2">Metalloprotease with an atypical HExxxH zinc-binding motif instead of HExxH, which interrupts the active site-containing helix without affecting the integrity of the catalytic site arrangement.</text>
</comment>
<comment type="domain">
    <text evidence="2">The N-terminal disordered region enhances its anchoring on microtubules, while dampening processivity on the polymerized substrate.</text>
</comment>
<comment type="similarity">
    <text evidence="6">Belongs to the peptidase MATCAP family.</text>
</comment>
<comment type="sequence caution" evidence="6">
    <conflict type="erroneous initiation">
        <sequence resource="EMBL-CDS" id="AAI28540"/>
    </conflict>
</comment>
<comment type="sequence caution" evidence="6">
    <conflict type="erroneous translation">
        <sequence resource="EMBL-CDS" id="CAD38862"/>
    </conflict>
    <text>Erroneous translation incorporating non-existent frameshift.</text>
</comment>
<keyword id="KW-0002">3D-structure</keyword>
<keyword id="KW-0025">Alternative splicing</keyword>
<keyword id="KW-0121">Carboxypeptidase</keyword>
<keyword id="KW-0963">Cytoplasm</keyword>
<keyword id="KW-0206">Cytoskeleton</keyword>
<keyword id="KW-0378">Hydrolase</keyword>
<keyword id="KW-0482">Metalloprotease</keyword>
<keyword id="KW-0645">Protease</keyword>
<keyword id="KW-1267">Proteomics identification</keyword>
<keyword id="KW-1185">Reference proteome</keyword>
<accession>Q68EN5</accession>
<accession>A2VCS8</accession>
<accession>Q8N3H9</accession>
<accession>Q8NAQ5</accession>
<accession>Q96IE5</accession>
<dbReference type="EC" id="3.4.17.17" evidence="2"/>
<dbReference type="EMBL" id="AK092303">
    <property type="protein sequence ID" value="BAC03856.1"/>
    <property type="molecule type" value="mRNA"/>
</dbReference>
<dbReference type="EMBL" id="AL834156">
    <property type="protein sequence ID" value="CAD38862.1"/>
    <property type="status" value="ALT_SEQ"/>
    <property type="molecule type" value="mRNA"/>
</dbReference>
<dbReference type="EMBL" id="CH471092">
    <property type="protein sequence ID" value="EAW83091.1"/>
    <property type="molecule type" value="Genomic_DNA"/>
</dbReference>
<dbReference type="EMBL" id="BC007594">
    <property type="protein sequence ID" value="AAH07594.1"/>
    <property type="molecule type" value="mRNA"/>
</dbReference>
<dbReference type="EMBL" id="BC080183">
    <property type="protein sequence ID" value="AAH80183.1"/>
    <property type="molecule type" value="mRNA"/>
</dbReference>
<dbReference type="EMBL" id="BC128539">
    <property type="protein sequence ID" value="AAI28540.1"/>
    <property type="status" value="ALT_INIT"/>
    <property type="molecule type" value="mRNA"/>
</dbReference>
<dbReference type="CCDS" id="CCDS42177.1">
    <molecule id="Q68EN5-1"/>
</dbReference>
<dbReference type="CCDS" id="CCDS92174.1">
    <molecule id="Q68EN5-2"/>
</dbReference>
<dbReference type="RefSeq" id="NP_001035805.1">
    <molecule id="Q68EN5-1"/>
    <property type="nucleotide sequence ID" value="NM_001040715.2"/>
</dbReference>
<dbReference type="RefSeq" id="NP_001356609.1">
    <molecule id="Q68EN5-1"/>
    <property type="nucleotide sequence ID" value="NM_001369680.1"/>
</dbReference>
<dbReference type="RefSeq" id="NP_001356610.1">
    <molecule id="Q68EN5-1"/>
    <property type="nucleotide sequence ID" value="NM_001369681.1"/>
</dbReference>
<dbReference type="RefSeq" id="NP_001356611.1">
    <molecule id="Q68EN5-1"/>
    <property type="nucleotide sequence ID" value="NM_001369682.1"/>
</dbReference>
<dbReference type="RefSeq" id="NP_001356613.1">
    <molecule id="Q68EN5-1"/>
    <property type="nucleotide sequence ID" value="NM_001369684.1"/>
</dbReference>
<dbReference type="RefSeq" id="NP_001356614.1">
    <molecule id="Q68EN5-1"/>
    <property type="nucleotide sequence ID" value="NM_001369685.1"/>
</dbReference>
<dbReference type="RefSeq" id="NP_001356615.1">
    <molecule id="Q68EN5-1"/>
    <property type="nucleotide sequence ID" value="NM_001369686.1"/>
</dbReference>
<dbReference type="RefSeq" id="NP_001356616.1">
    <molecule id="Q68EN5-2"/>
    <property type="nucleotide sequence ID" value="NM_001369687.1"/>
</dbReference>
<dbReference type="PDB" id="7Z5G">
    <property type="method" value="X-ray"/>
    <property type="resolution" value="2.11 A"/>
    <property type="chains" value="A/B/C/D=137-471"/>
</dbReference>
<dbReference type="PDB" id="7Z5H">
    <property type="method" value="X-ray"/>
    <property type="resolution" value="2.50 A"/>
    <property type="chains" value="A/B/C/D=137-471"/>
</dbReference>
<dbReference type="PDB" id="7Z6S">
    <property type="method" value="EM"/>
    <property type="resolution" value="2.90 A"/>
    <property type="chains" value="C/E=1-471"/>
</dbReference>
<dbReference type="PDBsum" id="7Z5G"/>
<dbReference type="PDBsum" id="7Z5H"/>
<dbReference type="PDBsum" id="7Z6S"/>
<dbReference type="EMDB" id="EMD-14529"/>
<dbReference type="SMR" id="Q68EN5"/>
<dbReference type="BioGRID" id="575692">
    <property type="interactions" value="4"/>
</dbReference>
<dbReference type="FunCoup" id="Q68EN5">
    <property type="interactions" value="83"/>
</dbReference>
<dbReference type="IntAct" id="Q68EN5">
    <property type="interactions" value="1"/>
</dbReference>
<dbReference type="STRING" id="9606.ENSP00000290881"/>
<dbReference type="iPTMnet" id="Q68EN5"/>
<dbReference type="PhosphoSitePlus" id="Q68EN5"/>
<dbReference type="BioMuta" id="KIAA0895L"/>
<dbReference type="DMDM" id="74736337"/>
<dbReference type="MassIVE" id="Q68EN5"/>
<dbReference type="PaxDb" id="9606-ENSP00000290881"/>
<dbReference type="PeptideAtlas" id="Q68EN5"/>
<dbReference type="ProteomicsDB" id="66136">
    <molecule id="Q68EN5-1"/>
</dbReference>
<dbReference type="ProteomicsDB" id="66137">
    <molecule id="Q68EN5-2"/>
</dbReference>
<dbReference type="Antibodypedia" id="68169">
    <property type="antibodies" value="15 antibodies from 7 providers"/>
</dbReference>
<dbReference type="DNASU" id="653319"/>
<dbReference type="Ensembl" id="ENST00000290881.11">
    <molecule id="Q68EN5-1"/>
    <property type="protein sequence ID" value="ENSP00000290881.7"/>
    <property type="gene ID" value="ENSG00000196123.13"/>
</dbReference>
<dbReference type="Ensembl" id="ENST00000561621.5">
    <molecule id="Q68EN5-2"/>
    <property type="protein sequence ID" value="ENSP00000457099.1"/>
    <property type="gene ID" value="ENSG00000196123.13"/>
</dbReference>
<dbReference type="Ensembl" id="ENST00000563902.2">
    <molecule id="Q68EN5-1"/>
    <property type="protein sequence ID" value="ENSP00000456838.1"/>
    <property type="gene ID" value="ENSG00000196123.13"/>
</dbReference>
<dbReference type="GeneID" id="653319"/>
<dbReference type="KEGG" id="hsa:653319"/>
<dbReference type="MANE-Select" id="ENST00000563902.2">
    <property type="protein sequence ID" value="ENSP00000456838.1"/>
    <property type="RefSeq nucleotide sequence ID" value="NM_001040715.2"/>
    <property type="RefSeq protein sequence ID" value="NP_001035805.1"/>
</dbReference>
<dbReference type="UCSC" id="uc002ert.4">
    <molecule id="Q68EN5-1"/>
    <property type="organism name" value="human"/>
</dbReference>
<dbReference type="AGR" id="HGNC:34408"/>
<dbReference type="CTD" id="653319"/>
<dbReference type="DisGeNET" id="653319"/>
<dbReference type="GeneCards" id="MATCAP1"/>
<dbReference type="HGNC" id="HGNC:34408">
    <property type="gene designation" value="MATCAP1"/>
</dbReference>
<dbReference type="HPA" id="ENSG00000196123">
    <property type="expression patterns" value="Tissue enhanced (brain)"/>
</dbReference>
<dbReference type="MIM" id="619978">
    <property type="type" value="gene"/>
</dbReference>
<dbReference type="neXtProt" id="NX_Q68EN5"/>
<dbReference type="OpenTargets" id="ENSG00000196123"/>
<dbReference type="PharmGKB" id="PA164721818"/>
<dbReference type="VEuPathDB" id="HostDB:ENSG00000196123"/>
<dbReference type="eggNOG" id="ENOG502QQGI">
    <property type="taxonomic scope" value="Eukaryota"/>
</dbReference>
<dbReference type="GeneTree" id="ENSGT00390000004417"/>
<dbReference type="HOGENOM" id="CLU_038689_2_0_1"/>
<dbReference type="InParanoid" id="Q68EN5"/>
<dbReference type="OMA" id="RILQPPW"/>
<dbReference type="OrthoDB" id="449345at2759"/>
<dbReference type="PAN-GO" id="Q68EN5">
    <property type="GO annotations" value="0 GO annotations based on evolutionary models"/>
</dbReference>
<dbReference type="PhylomeDB" id="Q68EN5"/>
<dbReference type="TreeFam" id="TF329621"/>
<dbReference type="PathwayCommons" id="Q68EN5"/>
<dbReference type="SignaLink" id="Q68EN5"/>
<dbReference type="BioGRID-ORCS" id="653319">
    <property type="hits" value="29 hits in 1161 CRISPR screens"/>
</dbReference>
<dbReference type="ChiTaRS" id="KIAA0895L">
    <property type="organism name" value="human"/>
</dbReference>
<dbReference type="GeneWiki" id="KIAA0895L"/>
<dbReference type="GenomeRNAi" id="653319"/>
<dbReference type="Pharos" id="Q68EN5">
    <property type="development level" value="Tdark"/>
</dbReference>
<dbReference type="PRO" id="PR:Q68EN5"/>
<dbReference type="Proteomes" id="UP000005640">
    <property type="component" value="Chromosome 16"/>
</dbReference>
<dbReference type="RNAct" id="Q68EN5">
    <property type="molecule type" value="protein"/>
</dbReference>
<dbReference type="Bgee" id="ENSG00000196123">
    <property type="expression patterns" value="Expressed in right hemisphere of cerebellum and 126 other cell types or tissues"/>
</dbReference>
<dbReference type="ExpressionAtlas" id="Q68EN5">
    <property type="expression patterns" value="baseline and differential"/>
</dbReference>
<dbReference type="GO" id="GO:0005737">
    <property type="term" value="C:cytoplasm"/>
    <property type="evidence" value="ECO:0007669"/>
    <property type="project" value="UniProtKB-KW"/>
</dbReference>
<dbReference type="GO" id="GO:0005874">
    <property type="term" value="C:microtubule"/>
    <property type="evidence" value="ECO:0000314"/>
    <property type="project" value="UniProtKB"/>
</dbReference>
<dbReference type="GO" id="GO:0004181">
    <property type="term" value="F:metallocarboxypeptidase activity"/>
    <property type="evidence" value="ECO:0000314"/>
    <property type="project" value="UniProtKB"/>
</dbReference>
<dbReference type="GO" id="GO:0106423">
    <property type="term" value="F:tubulin-tyrosine carboxypeptidase"/>
    <property type="evidence" value="ECO:0000314"/>
    <property type="project" value="UniProtKB"/>
</dbReference>
<dbReference type="GO" id="GO:0007420">
    <property type="term" value="P:brain development"/>
    <property type="evidence" value="ECO:0000250"/>
    <property type="project" value="UniProtKB"/>
</dbReference>
<dbReference type="GO" id="GO:0006508">
    <property type="term" value="P:proteolysis"/>
    <property type="evidence" value="ECO:0007669"/>
    <property type="project" value="UniProtKB-KW"/>
</dbReference>
<dbReference type="InterPro" id="IPR012548">
    <property type="entry name" value="MATCAP"/>
</dbReference>
<dbReference type="PANTHER" id="PTHR31817">
    <property type="match status" value="1"/>
</dbReference>
<dbReference type="PANTHER" id="PTHR31817:SF1">
    <property type="entry name" value="MICROTUBULE-ASSOCIATED TYROSINE CARBOXYPEPTIDASE 1"/>
    <property type="match status" value="1"/>
</dbReference>
<dbReference type="Pfam" id="PF08014">
    <property type="entry name" value="MATCAP"/>
    <property type="match status" value="1"/>
</dbReference>
<dbReference type="SMART" id="SM01154">
    <property type="entry name" value="DUF1704"/>
    <property type="match status" value="1"/>
</dbReference>
<sequence length="471" mass="53446">MVLDSGAQAYDQAPPSPPTSPPSLRHRLKPSDRDGPPLYPWSQSLALPLALAVPPALQPQPEQQPFSQMLLGHRGHMRRSESTYSVNSTGRRGRGTLGRPPPGRGRNPGGGTLRPAASLPHIAKTQRDAGHIASKSPCMLVALRPTNMDRERDKFFQSHYTYNPQFEYQEPMPTAVLEKYCEASGQFIHQAVGIIEAVLEKFGTYEHFEAATGGQLLTKCQIWSIVRKYMQKEGCAGEVVVQLSEDLLSQAVMMVENSRPTLAINLTGARQYWLEGMLRHEIGTHYLRGVNNARQPWHNAEGRLRYGLRPANPTEEGLASLHSVLFRKQPFLWRAALLYYTIHRAARMSFRQLFQDLERYVQDADVRWEYCVRAKRGQTDTSLPGCFSKDQVYLDGIVRILRHRQTIDFPLLTSLGKVSYEDVDHLRPHGVLDNTRVPHFMQDLARYRQQLEHIMATNRLDEAELGRLLPD</sequence>
<evidence type="ECO:0000256" key="1">
    <source>
        <dbReference type="SAM" id="MobiDB-lite"/>
    </source>
</evidence>
<evidence type="ECO:0000269" key="2">
    <source>
    </source>
</evidence>
<evidence type="ECO:0000303" key="3">
    <source>
    </source>
</evidence>
<evidence type="ECO:0000303" key="4">
    <source>
    </source>
</evidence>
<evidence type="ECO:0000303" key="5">
    <source>
    </source>
</evidence>
<evidence type="ECO:0000305" key="6"/>
<evidence type="ECO:0000305" key="7">
    <source>
    </source>
</evidence>
<evidence type="ECO:0000312" key="8">
    <source>
        <dbReference type="HGNC" id="HGNC:34408"/>
    </source>
</evidence>
<evidence type="ECO:0007744" key="9">
    <source>
        <dbReference type="PDB" id="7Z6S"/>
    </source>
</evidence>
<evidence type="ECO:0007829" key="10">
    <source>
        <dbReference type="PDB" id="7Z5G"/>
    </source>
</evidence>
<evidence type="ECO:0007829" key="11">
    <source>
        <dbReference type="PDB" id="7Z5H"/>
    </source>
</evidence>
<organism>
    <name type="scientific">Homo sapiens</name>
    <name type="common">Human</name>
    <dbReference type="NCBI Taxonomy" id="9606"/>
    <lineage>
        <taxon>Eukaryota</taxon>
        <taxon>Metazoa</taxon>
        <taxon>Chordata</taxon>
        <taxon>Craniata</taxon>
        <taxon>Vertebrata</taxon>
        <taxon>Euteleostomi</taxon>
        <taxon>Mammalia</taxon>
        <taxon>Eutheria</taxon>
        <taxon>Euarchontoglires</taxon>
        <taxon>Primates</taxon>
        <taxon>Haplorrhini</taxon>
        <taxon>Catarrhini</taxon>
        <taxon>Hominidae</taxon>
        <taxon>Homo</taxon>
    </lineage>
</organism>
<protein>
    <recommendedName>
        <fullName evidence="7">Microtubule-associated tyrosine carboxypeptidase 1</fullName>
        <ecNumber evidence="2">3.4.17.17</ecNumber>
    </recommendedName>
    <alternativeName>
        <fullName evidence="5">Microtubule-associated tyrosine carboxypeptidase</fullName>
    </alternativeName>
</protein>